<protein>
    <recommendedName>
        <fullName evidence="1">Glycerol-3-phosphate acyltransferase</fullName>
        <shortName evidence="1">GPAT</shortName>
        <ecNumber evidence="1">2.3.1.15</ecNumber>
    </recommendedName>
</protein>
<evidence type="ECO:0000255" key="1">
    <source>
        <dbReference type="HAMAP-Rule" id="MF_00393"/>
    </source>
</evidence>
<reference key="1">
    <citation type="journal article" date="2007" name="J. Bacteriol.">
        <title>The genome sequence of avian pathogenic Escherichia coli strain O1:K1:H7 shares strong similarities with human extraintestinal pathogenic E. coli genomes.</title>
        <authorList>
            <person name="Johnson T.J."/>
            <person name="Kariyawasam S."/>
            <person name="Wannemuehler Y."/>
            <person name="Mangiamele P."/>
            <person name="Johnson S.J."/>
            <person name="Doetkott C."/>
            <person name="Skyberg J.A."/>
            <person name="Lynne A.M."/>
            <person name="Johnson J.R."/>
            <person name="Nolan L.K."/>
        </authorList>
    </citation>
    <scope>NUCLEOTIDE SEQUENCE [LARGE SCALE GENOMIC DNA]</scope>
</reference>
<sequence>MTFCYPCRAFALLTRGFTSFMSGWPRIYYKLLNLPLSILVKSKSIPADPAPELGLDTSRPIMYVLPYNSKADLLTLRAQCLAHDLPDPLEPLEIDGTLLPRYVFIHGGPRVFTYYTPKEESIKLFHDYLDLHRSNPNLDVQMVPVSVMFGRAPGREKGEVNPPLRMLNGVQKFFAVLWLGRDSFVRFSPSVSLRRMADEHGTDKTIAQKLARVARMHFARQRLAAVGPRLPARQDLFNKLLASRAIAKAVEDEARSKKISHEKAQQNAIALMEEIAANFSYEMIRLTDRILGFTWNRLYQGINVHNAERVRQLAHDGHELVYVPCHRSHMDYLLLSYVLYHQGLVPPHIAAGINLNFWPAGPIFRRLGAFFIRRTFKGNKLYSTVFREYLGELFSRGYSVEYFVEGGRSRTGRLLDPKTGTLSMTIQAMLRGGTRPITLIPIYIGYEHVMEVGTYAKELRGATKEKESLPQMLRGLSKLRNLGQGYVNFGEPMPLMTYLNQHVPDWRESIDPIEAVRPAWLTPTVNNIAADLMVRINNAGAANAMNLCCTALLASRQRSLTREQLTEQLNCYLDLMRNVPYSTDSTVPSASASELIDHALQMNKFEVEKDTIGDIIILPREQAVLMTYYRNNIAHMLVLPSLMAAIVTQHRHISRDVLMEHVNVLYPMLKAELFLRWDRDELPDVIDALANEMQRQGLITLQDDELHINPAHSRTLQLLAAGARETLQRYAITFWLLSANPSINRGTLEKESRTVAQRLSVLHGINAPEFFDKAVFSSLVLTLRDEGYISDSGDAEPAETMKVYQLLAELITSDVRLTIESATQGEG</sequence>
<gene>
    <name evidence="1" type="primary">plsB</name>
    <name type="ordered locus">Ecok1_40140</name>
    <name type="ORF">APECO1_2428</name>
</gene>
<accession>A1AIL8</accession>
<name>PLSB_ECOK1</name>
<dbReference type="EC" id="2.3.1.15" evidence="1"/>
<dbReference type="EMBL" id="CP000468">
    <property type="protein sequence ID" value="ABJ03508.1"/>
    <property type="molecule type" value="Genomic_DNA"/>
</dbReference>
<dbReference type="SMR" id="A1AIL8"/>
<dbReference type="KEGG" id="ecv:APECO1_2428"/>
<dbReference type="HOGENOM" id="CLU_015407_0_0_6"/>
<dbReference type="UniPathway" id="UPA00557">
    <property type="reaction ID" value="UER00612"/>
</dbReference>
<dbReference type="Proteomes" id="UP000008216">
    <property type="component" value="Chromosome"/>
</dbReference>
<dbReference type="GO" id="GO:0005886">
    <property type="term" value="C:plasma membrane"/>
    <property type="evidence" value="ECO:0007669"/>
    <property type="project" value="UniProtKB-SubCell"/>
</dbReference>
<dbReference type="GO" id="GO:0004366">
    <property type="term" value="F:glycerol-3-phosphate O-acyltransferase activity"/>
    <property type="evidence" value="ECO:0007669"/>
    <property type="project" value="UniProtKB-UniRule"/>
</dbReference>
<dbReference type="GO" id="GO:0016024">
    <property type="term" value="P:CDP-diacylglycerol biosynthetic process"/>
    <property type="evidence" value="ECO:0007669"/>
    <property type="project" value="UniProtKB-UniRule"/>
</dbReference>
<dbReference type="GO" id="GO:0006631">
    <property type="term" value="P:fatty acid metabolic process"/>
    <property type="evidence" value="ECO:0007669"/>
    <property type="project" value="TreeGrafter"/>
</dbReference>
<dbReference type="CDD" id="cd07993">
    <property type="entry name" value="LPLAT_DHAPAT-like"/>
    <property type="match status" value="1"/>
</dbReference>
<dbReference type="HAMAP" id="MF_00393">
    <property type="entry name" value="Glyc3P_acyltrans"/>
    <property type="match status" value="1"/>
</dbReference>
<dbReference type="InterPro" id="IPR022284">
    <property type="entry name" value="GPAT/DHAPAT"/>
</dbReference>
<dbReference type="InterPro" id="IPR045520">
    <property type="entry name" value="GPAT/DHAPAT_C"/>
</dbReference>
<dbReference type="InterPro" id="IPR041728">
    <property type="entry name" value="GPAT/DHAPAT_LPLAT"/>
</dbReference>
<dbReference type="InterPro" id="IPR028354">
    <property type="entry name" value="GPAT_PlsB"/>
</dbReference>
<dbReference type="InterPro" id="IPR002123">
    <property type="entry name" value="Plipid/glycerol_acylTrfase"/>
</dbReference>
<dbReference type="NCBIfam" id="TIGR03703">
    <property type="entry name" value="plsB"/>
    <property type="match status" value="1"/>
</dbReference>
<dbReference type="NCBIfam" id="NF003441">
    <property type="entry name" value="PRK04974.1"/>
    <property type="match status" value="1"/>
</dbReference>
<dbReference type="PANTHER" id="PTHR12563:SF17">
    <property type="entry name" value="DIHYDROXYACETONE PHOSPHATE ACYLTRANSFERASE"/>
    <property type="match status" value="1"/>
</dbReference>
<dbReference type="PANTHER" id="PTHR12563">
    <property type="entry name" value="GLYCEROL-3-PHOSPHATE ACYLTRANSFERASE"/>
    <property type="match status" value="1"/>
</dbReference>
<dbReference type="Pfam" id="PF01553">
    <property type="entry name" value="Acyltransferase"/>
    <property type="match status" value="1"/>
</dbReference>
<dbReference type="Pfam" id="PF19277">
    <property type="entry name" value="GPAT_C"/>
    <property type="match status" value="1"/>
</dbReference>
<dbReference type="PIRSF" id="PIRSF500064">
    <property type="entry name" value="GPAT"/>
    <property type="match status" value="1"/>
</dbReference>
<dbReference type="PIRSF" id="PIRSF000437">
    <property type="entry name" value="GPAT_DHAPAT"/>
    <property type="match status" value="1"/>
</dbReference>
<dbReference type="SMART" id="SM00563">
    <property type="entry name" value="PlsC"/>
    <property type="match status" value="1"/>
</dbReference>
<dbReference type="SUPFAM" id="SSF69593">
    <property type="entry name" value="Glycerol-3-phosphate (1)-acyltransferase"/>
    <property type="match status" value="1"/>
</dbReference>
<proteinExistence type="inferred from homology"/>
<keyword id="KW-0012">Acyltransferase</keyword>
<keyword id="KW-0997">Cell inner membrane</keyword>
<keyword id="KW-1003">Cell membrane</keyword>
<keyword id="KW-0444">Lipid biosynthesis</keyword>
<keyword id="KW-0443">Lipid metabolism</keyword>
<keyword id="KW-0472">Membrane</keyword>
<keyword id="KW-0594">Phospholipid biosynthesis</keyword>
<keyword id="KW-1208">Phospholipid metabolism</keyword>
<keyword id="KW-1185">Reference proteome</keyword>
<keyword id="KW-0808">Transferase</keyword>
<comment type="catalytic activity">
    <reaction evidence="1">
        <text>sn-glycerol 3-phosphate + an acyl-CoA = a 1-acyl-sn-glycero-3-phosphate + CoA</text>
        <dbReference type="Rhea" id="RHEA:15325"/>
        <dbReference type="ChEBI" id="CHEBI:57287"/>
        <dbReference type="ChEBI" id="CHEBI:57597"/>
        <dbReference type="ChEBI" id="CHEBI:57970"/>
        <dbReference type="ChEBI" id="CHEBI:58342"/>
        <dbReference type="EC" id="2.3.1.15"/>
    </reaction>
</comment>
<comment type="pathway">
    <text evidence="1">Phospholipid metabolism; CDP-diacylglycerol biosynthesis; CDP-diacylglycerol from sn-glycerol 3-phosphate: step 1/3.</text>
</comment>
<comment type="subcellular location">
    <subcellularLocation>
        <location evidence="1">Cell inner membrane</location>
        <topology evidence="1">Peripheral membrane protein</topology>
        <orientation evidence="1">Cytoplasmic side</orientation>
    </subcellularLocation>
</comment>
<comment type="domain">
    <text evidence="1">The HXXXXD motif is essential for acyltransferase activity and may constitute the binding site for the phosphate moiety of the glycerol-3-phosphate.</text>
</comment>
<comment type="similarity">
    <text evidence="1">Belongs to the GPAT/DAPAT family.</text>
</comment>
<feature type="chain" id="PRO_1000049430" description="Glycerol-3-phosphate acyltransferase">
    <location>
        <begin position="1"/>
        <end position="827"/>
    </location>
</feature>
<feature type="short sequence motif" description="HXXXXD motif">
    <location>
        <begin position="325"/>
        <end position="330"/>
    </location>
</feature>
<organism>
    <name type="scientific">Escherichia coli O1:K1 / APEC</name>
    <dbReference type="NCBI Taxonomy" id="405955"/>
    <lineage>
        <taxon>Bacteria</taxon>
        <taxon>Pseudomonadati</taxon>
        <taxon>Pseudomonadota</taxon>
        <taxon>Gammaproteobacteria</taxon>
        <taxon>Enterobacterales</taxon>
        <taxon>Enterobacteriaceae</taxon>
        <taxon>Escherichia</taxon>
    </lineage>
</organism>